<name>RL4_YERPA</name>
<reference key="1">
    <citation type="journal article" date="2006" name="J. Bacteriol.">
        <title>Complete genome sequence of Yersinia pestis strains Antiqua and Nepal516: evidence of gene reduction in an emerging pathogen.</title>
        <authorList>
            <person name="Chain P.S.G."/>
            <person name="Hu P."/>
            <person name="Malfatti S.A."/>
            <person name="Radnedge L."/>
            <person name="Larimer F."/>
            <person name="Vergez L.M."/>
            <person name="Worsham P."/>
            <person name="Chu M.C."/>
            <person name="Andersen G.L."/>
        </authorList>
    </citation>
    <scope>NUCLEOTIDE SEQUENCE [LARGE SCALE GENOMIC DNA]</scope>
    <source>
        <strain>Antiqua</strain>
    </source>
</reference>
<keyword id="KW-0687">Ribonucleoprotein</keyword>
<keyword id="KW-0689">Ribosomal protein</keyword>
<keyword id="KW-0694">RNA-binding</keyword>
<keyword id="KW-0699">rRNA-binding</keyword>
<organism>
    <name type="scientific">Yersinia pestis bv. Antiqua (strain Antiqua)</name>
    <dbReference type="NCBI Taxonomy" id="360102"/>
    <lineage>
        <taxon>Bacteria</taxon>
        <taxon>Pseudomonadati</taxon>
        <taxon>Pseudomonadota</taxon>
        <taxon>Gammaproteobacteria</taxon>
        <taxon>Enterobacterales</taxon>
        <taxon>Yersiniaceae</taxon>
        <taxon>Yersinia</taxon>
    </lineage>
</organism>
<comment type="function">
    <text evidence="1">One of the primary rRNA binding proteins, this protein initially binds near the 5'-end of the 23S rRNA. It is important during the early stages of 50S assembly. It makes multiple contacts with different domains of the 23S rRNA in the assembled 50S subunit and ribosome.</text>
</comment>
<comment type="function">
    <text evidence="1">Forms part of the polypeptide exit tunnel.</text>
</comment>
<comment type="subunit">
    <text evidence="1">Part of the 50S ribosomal subunit.</text>
</comment>
<comment type="similarity">
    <text evidence="1">Belongs to the universal ribosomal protein uL4 family.</text>
</comment>
<evidence type="ECO:0000255" key="1">
    <source>
        <dbReference type="HAMAP-Rule" id="MF_01328"/>
    </source>
</evidence>
<evidence type="ECO:0000256" key="2">
    <source>
        <dbReference type="SAM" id="MobiDB-lite"/>
    </source>
</evidence>
<evidence type="ECO:0000305" key="3"/>
<dbReference type="EMBL" id="CP000308">
    <property type="protein sequence ID" value="ABG15224.1"/>
    <property type="molecule type" value="Genomic_DNA"/>
</dbReference>
<dbReference type="RefSeq" id="WP_002218934.1">
    <property type="nucleotide sequence ID" value="NZ_CP009906.1"/>
</dbReference>
<dbReference type="SMR" id="Q1C2U8"/>
<dbReference type="GeneID" id="96663195"/>
<dbReference type="KEGG" id="ypa:YPA_3262"/>
<dbReference type="Proteomes" id="UP000001971">
    <property type="component" value="Chromosome"/>
</dbReference>
<dbReference type="GO" id="GO:1990904">
    <property type="term" value="C:ribonucleoprotein complex"/>
    <property type="evidence" value="ECO:0007669"/>
    <property type="project" value="UniProtKB-KW"/>
</dbReference>
<dbReference type="GO" id="GO:0005840">
    <property type="term" value="C:ribosome"/>
    <property type="evidence" value="ECO:0007669"/>
    <property type="project" value="UniProtKB-KW"/>
</dbReference>
<dbReference type="GO" id="GO:0019843">
    <property type="term" value="F:rRNA binding"/>
    <property type="evidence" value="ECO:0007669"/>
    <property type="project" value="UniProtKB-UniRule"/>
</dbReference>
<dbReference type="GO" id="GO:0003735">
    <property type="term" value="F:structural constituent of ribosome"/>
    <property type="evidence" value="ECO:0007669"/>
    <property type="project" value="InterPro"/>
</dbReference>
<dbReference type="GO" id="GO:0006412">
    <property type="term" value="P:translation"/>
    <property type="evidence" value="ECO:0007669"/>
    <property type="project" value="UniProtKB-UniRule"/>
</dbReference>
<dbReference type="FunFam" id="3.40.1370.10:FF:000001">
    <property type="entry name" value="50S ribosomal protein L4"/>
    <property type="match status" value="1"/>
</dbReference>
<dbReference type="Gene3D" id="3.40.1370.10">
    <property type="match status" value="1"/>
</dbReference>
<dbReference type="HAMAP" id="MF_01328_B">
    <property type="entry name" value="Ribosomal_uL4_B"/>
    <property type="match status" value="1"/>
</dbReference>
<dbReference type="InterPro" id="IPR002136">
    <property type="entry name" value="Ribosomal_uL4"/>
</dbReference>
<dbReference type="InterPro" id="IPR013005">
    <property type="entry name" value="Ribosomal_uL4-like"/>
</dbReference>
<dbReference type="InterPro" id="IPR023574">
    <property type="entry name" value="Ribosomal_uL4_dom_sf"/>
</dbReference>
<dbReference type="NCBIfam" id="TIGR03953">
    <property type="entry name" value="rplD_bact"/>
    <property type="match status" value="1"/>
</dbReference>
<dbReference type="PANTHER" id="PTHR10746">
    <property type="entry name" value="50S RIBOSOMAL PROTEIN L4"/>
    <property type="match status" value="1"/>
</dbReference>
<dbReference type="PANTHER" id="PTHR10746:SF6">
    <property type="entry name" value="LARGE RIBOSOMAL SUBUNIT PROTEIN UL4M"/>
    <property type="match status" value="1"/>
</dbReference>
<dbReference type="Pfam" id="PF00573">
    <property type="entry name" value="Ribosomal_L4"/>
    <property type="match status" value="1"/>
</dbReference>
<dbReference type="SUPFAM" id="SSF52166">
    <property type="entry name" value="Ribosomal protein L4"/>
    <property type="match status" value="1"/>
</dbReference>
<sequence>MELVMKDAPGALTVSETTFGRDFNEALVHQVVVAYAAGARQGTRAQKTRAEVTGSGKKPWRQKGTGRARAGSVKSPIWRSGGVTFAAKPQDHSQKVNKKMYRGALKSILSELVRQDRLIIVEKFSVEAPKTKLLAQKLKDMALEDVLIVTGELDENLFLAARNLYKVDVRDVAGIDPVSLIAFDKVVMTADAVKQVEEMLA</sequence>
<protein>
    <recommendedName>
        <fullName evidence="1">Large ribosomal subunit protein uL4</fullName>
    </recommendedName>
    <alternativeName>
        <fullName evidence="3">50S ribosomal protein L4</fullName>
    </alternativeName>
</protein>
<feature type="chain" id="PRO_1000052528" description="Large ribosomal subunit protein uL4">
    <location>
        <begin position="1"/>
        <end position="201"/>
    </location>
</feature>
<feature type="region of interest" description="Disordered" evidence="2">
    <location>
        <begin position="45"/>
        <end position="73"/>
    </location>
</feature>
<accession>Q1C2U8</accession>
<proteinExistence type="inferred from homology"/>
<gene>
    <name evidence="1" type="primary">rplD</name>
    <name type="ordered locus">YPA_3262</name>
</gene>